<protein>
    <recommendedName>
        <fullName>DNA translocase FtsK</fullName>
    </recommendedName>
</protein>
<comment type="function">
    <text evidence="1">Essential cell division protein that coordinates cell division and chromosome segregation. The N-terminus is involved in assembly of the cell-division machinery. The C-terminus functions as a DNA motor that moves dsDNA in an ATP-dependent manner towards the dif recombination site, which is located within the replication terminus region. Required for activation of the Xer recombinase, allowing activation of chromosome unlinking by recombination (By similarity).</text>
</comment>
<comment type="subunit">
    <text evidence="1">Homohexamer. Forms a ring that surrounds DNA (By similarity).</text>
</comment>
<comment type="subcellular location">
    <subcellularLocation>
        <location evidence="1">Cell membrane</location>
        <topology evidence="1">Multi-pass membrane protein</topology>
    </subcellularLocation>
    <text evidence="1">Located at the septum.</text>
</comment>
<comment type="domain">
    <text evidence="1">Consists of an N-terminal domain, which is sufficient for the localization to the septal ring and is required for cell division, followed by a linker domain, and a C-terminal domain, which forms the translocation motor involved in chromosome segregation. The C-terminal domain can be further subdivided into alpha, beta and gamma subdomains. The alpha and beta subdomains form the DNA pump, and the gamma subdomain is a regulatory subdomain (By similarity).</text>
</comment>
<comment type="similarity">
    <text evidence="5">Belongs to the FtsK/SpoIIIE/SftA family.</text>
</comment>
<gene>
    <name type="primary">ftsK</name>
    <name type="ordered locus">SERP0843</name>
</gene>
<evidence type="ECO:0000250" key="1"/>
<evidence type="ECO:0000255" key="2"/>
<evidence type="ECO:0000255" key="3">
    <source>
        <dbReference type="PROSITE-ProRule" id="PRU00289"/>
    </source>
</evidence>
<evidence type="ECO:0000256" key="4">
    <source>
        <dbReference type="SAM" id="MobiDB-lite"/>
    </source>
</evidence>
<evidence type="ECO:0000305" key="5"/>
<name>FTSK_STAEQ</name>
<proteinExistence type="inferred from homology"/>
<sequence>MPQAKKRTSTKRKGNKKTNKKKQNETPLRYIFSIIVVILIILGAFQLGIIGRMIDSFFNYLFGMSRYLTYILVLIATIFITYSKQIPRTRRSIGAIVLQLALLFIAQLYFHFSHNITSQREPVLSFVYKAYEQTHFPNFGGGLIGFYLLKLFIPLISIVGVIIITILLLASSFILLLNLRHRDVTKSLFDNLKSSSNHASESIKQKREQNKIKKEEKAQLKEAKIERKKQKKSRQNNNVIKDVSDFPEISQSDDIPIYGHNEQEDKRPNTANQRQKRVLDNEQFQQSLPSTKNQSINNNQPSTTAENNQQQSQAEGSISEAGEEANIEYTVPPLSLLKQPTKQKTTSKAEVQRKGQVLESTLKNFGVNAKVTQIKIGPAVTQYEIQPAQGVKVSKIVNLHNDIALALAAKDVRIEAPIPGRSAVGIEVPNDKISLVTLKEVLEDKFPSKYKLEVGIGRDISGDPISIQLNEMPHLLVAGSTGSGKSVCINGIITSILLNTKPHEVKLMLIDPKMVELNVYNGIPHLLIPVVTNPHKASQALEKIVSEMERRYDLFQHSSTRNIEGYNQYIRKQNEELDEKQPELPYIVVIVDELADLMMVAGKEVENAIQRITQMARAAGIHLIVATQRPSVDVITGIIKNNIPSRIAFAVSSQTDSRTIIGAGGAEKLLGKGDMLYVGNGESTTTRIQGAFLSDQEVQDVVNYVVEQQKANYVKEMEPDAPVDKSEMKSEDALYDEAYLFVIEKQKASTSLLQRQFRIGYNRASRLMDDLERNQVIGPQKGSKPRQILVDLENDEV</sequence>
<feature type="chain" id="PRO_0000098300" description="DNA translocase FtsK">
    <location>
        <begin position="1"/>
        <end position="797"/>
    </location>
</feature>
<feature type="transmembrane region" description="Helical" evidence="2">
    <location>
        <begin position="31"/>
        <end position="51"/>
    </location>
</feature>
<feature type="transmembrane region" description="Helical" evidence="2">
    <location>
        <begin position="60"/>
        <end position="80"/>
    </location>
</feature>
<feature type="transmembrane region" description="Helical" evidence="2">
    <location>
        <begin position="92"/>
        <end position="112"/>
    </location>
</feature>
<feature type="transmembrane region" description="Helical" evidence="2">
    <location>
        <begin position="151"/>
        <end position="171"/>
    </location>
</feature>
<feature type="topological domain" description="Cytoplasmic" evidence="2">
    <location>
        <begin position="172"/>
        <end position="797"/>
    </location>
</feature>
<feature type="domain" description="FtsK" evidence="3">
    <location>
        <begin position="462"/>
        <end position="658"/>
    </location>
</feature>
<feature type="region of interest" description="Disordered" evidence="4">
    <location>
        <begin position="1"/>
        <end position="22"/>
    </location>
</feature>
<feature type="region of interest" description="Disordered" evidence="4">
    <location>
        <begin position="199"/>
        <end position="320"/>
    </location>
</feature>
<feature type="region of interest" description="Disordered" evidence="4">
    <location>
        <begin position="331"/>
        <end position="350"/>
    </location>
</feature>
<feature type="compositionally biased region" description="Basic residues" evidence="4">
    <location>
        <begin position="1"/>
        <end position="21"/>
    </location>
</feature>
<feature type="compositionally biased region" description="Basic and acidic residues" evidence="4">
    <location>
        <begin position="201"/>
        <end position="225"/>
    </location>
</feature>
<feature type="compositionally biased region" description="Polar residues" evidence="4">
    <location>
        <begin position="282"/>
        <end position="313"/>
    </location>
</feature>
<feature type="compositionally biased region" description="Polar residues" evidence="4">
    <location>
        <begin position="338"/>
        <end position="349"/>
    </location>
</feature>
<feature type="binding site" evidence="3">
    <location>
        <begin position="482"/>
        <end position="487"/>
    </location>
    <ligand>
        <name>ATP</name>
        <dbReference type="ChEBI" id="CHEBI:30616"/>
    </ligand>
</feature>
<accession>Q5HPR5</accession>
<reference key="1">
    <citation type="journal article" date="2005" name="J. Bacteriol.">
        <title>Insights on evolution of virulence and resistance from the complete genome analysis of an early methicillin-resistant Staphylococcus aureus strain and a biofilm-producing methicillin-resistant Staphylococcus epidermidis strain.</title>
        <authorList>
            <person name="Gill S.R."/>
            <person name="Fouts D.E."/>
            <person name="Archer G.L."/>
            <person name="Mongodin E.F."/>
            <person name="DeBoy R.T."/>
            <person name="Ravel J."/>
            <person name="Paulsen I.T."/>
            <person name="Kolonay J.F."/>
            <person name="Brinkac L.M."/>
            <person name="Beanan M.J."/>
            <person name="Dodson R.J."/>
            <person name="Daugherty S.C."/>
            <person name="Madupu R."/>
            <person name="Angiuoli S.V."/>
            <person name="Durkin A.S."/>
            <person name="Haft D.H."/>
            <person name="Vamathevan J.J."/>
            <person name="Khouri H."/>
            <person name="Utterback T.R."/>
            <person name="Lee C."/>
            <person name="Dimitrov G."/>
            <person name="Jiang L."/>
            <person name="Qin H."/>
            <person name="Weidman J."/>
            <person name="Tran K."/>
            <person name="Kang K.H."/>
            <person name="Hance I.R."/>
            <person name="Nelson K.E."/>
            <person name="Fraser C.M."/>
        </authorList>
    </citation>
    <scope>NUCLEOTIDE SEQUENCE [LARGE SCALE GENOMIC DNA]</scope>
    <source>
        <strain>ATCC 35984 / DSM 28319 / BCRC 17069 / CCUG 31568 / BM 3577 / RP62A</strain>
    </source>
</reference>
<keyword id="KW-0067">ATP-binding</keyword>
<keyword id="KW-0131">Cell cycle</keyword>
<keyword id="KW-0132">Cell division</keyword>
<keyword id="KW-1003">Cell membrane</keyword>
<keyword id="KW-0159">Chromosome partition</keyword>
<keyword id="KW-0238">DNA-binding</keyword>
<keyword id="KW-0472">Membrane</keyword>
<keyword id="KW-0547">Nucleotide-binding</keyword>
<keyword id="KW-1185">Reference proteome</keyword>
<keyword id="KW-0812">Transmembrane</keyword>
<keyword id="KW-1133">Transmembrane helix</keyword>
<dbReference type="EMBL" id="CP000029">
    <property type="protein sequence ID" value="AAW54212.1"/>
    <property type="molecule type" value="Genomic_DNA"/>
</dbReference>
<dbReference type="RefSeq" id="WP_002439534.1">
    <property type="nucleotide sequence ID" value="NC_002976.3"/>
</dbReference>
<dbReference type="SMR" id="Q5HPR5"/>
<dbReference type="STRING" id="176279.SERP0843"/>
<dbReference type="KEGG" id="ser:SERP0843"/>
<dbReference type="eggNOG" id="COG1674">
    <property type="taxonomic scope" value="Bacteria"/>
</dbReference>
<dbReference type="HOGENOM" id="CLU_001981_9_2_9"/>
<dbReference type="Proteomes" id="UP000000531">
    <property type="component" value="Chromosome"/>
</dbReference>
<dbReference type="GO" id="GO:0005886">
    <property type="term" value="C:plasma membrane"/>
    <property type="evidence" value="ECO:0007669"/>
    <property type="project" value="UniProtKB-SubCell"/>
</dbReference>
<dbReference type="GO" id="GO:0005524">
    <property type="term" value="F:ATP binding"/>
    <property type="evidence" value="ECO:0007669"/>
    <property type="project" value="UniProtKB-KW"/>
</dbReference>
<dbReference type="GO" id="GO:0016887">
    <property type="term" value="F:ATP hydrolysis activity"/>
    <property type="evidence" value="ECO:0007669"/>
    <property type="project" value="InterPro"/>
</dbReference>
<dbReference type="GO" id="GO:0003677">
    <property type="term" value="F:DNA binding"/>
    <property type="evidence" value="ECO:0007669"/>
    <property type="project" value="UniProtKB-KW"/>
</dbReference>
<dbReference type="GO" id="GO:0051301">
    <property type="term" value="P:cell division"/>
    <property type="evidence" value="ECO:0007669"/>
    <property type="project" value="UniProtKB-KW"/>
</dbReference>
<dbReference type="GO" id="GO:0007059">
    <property type="term" value="P:chromosome segregation"/>
    <property type="evidence" value="ECO:0007669"/>
    <property type="project" value="UniProtKB-KW"/>
</dbReference>
<dbReference type="Gene3D" id="3.30.980.40">
    <property type="match status" value="1"/>
</dbReference>
<dbReference type="Gene3D" id="3.40.50.300">
    <property type="entry name" value="P-loop containing nucleotide triphosphate hydrolases"/>
    <property type="match status" value="1"/>
</dbReference>
<dbReference type="Gene3D" id="1.10.10.10">
    <property type="entry name" value="Winged helix-like DNA-binding domain superfamily/Winged helix DNA-binding domain"/>
    <property type="match status" value="1"/>
</dbReference>
<dbReference type="InterPro" id="IPR003593">
    <property type="entry name" value="AAA+_ATPase"/>
</dbReference>
<dbReference type="InterPro" id="IPR050206">
    <property type="entry name" value="FtsK/SpoIIIE/SftA"/>
</dbReference>
<dbReference type="InterPro" id="IPR041027">
    <property type="entry name" value="FtsK_alpha"/>
</dbReference>
<dbReference type="InterPro" id="IPR002543">
    <property type="entry name" value="FtsK_dom"/>
</dbReference>
<dbReference type="InterPro" id="IPR018541">
    <property type="entry name" value="Ftsk_gamma"/>
</dbReference>
<dbReference type="InterPro" id="IPR036259">
    <property type="entry name" value="MFS_trans_sf"/>
</dbReference>
<dbReference type="InterPro" id="IPR027417">
    <property type="entry name" value="P-loop_NTPase"/>
</dbReference>
<dbReference type="InterPro" id="IPR036388">
    <property type="entry name" value="WH-like_DNA-bd_sf"/>
</dbReference>
<dbReference type="InterPro" id="IPR036390">
    <property type="entry name" value="WH_DNA-bd_sf"/>
</dbReference>
<dbReference type="PANTHER" id="PTHR22683:SF41">
    <property type="entry name" value="DNA TRANSLOCASE FTSK"/>
    <property type="match status" value="1"/>
</dbReference>
<dbReference type="PANTHER" id="PTHR22683">
    <property type="entry name" value="SPORULATION PROTEIN RELATED"/>
    <property type="match status" value="1"/>
</dbReference>
<dbReference type="Pfam" id="PF17854">
    <property type="entry name" value="FtsK_alpha"/>
    <property type="match status" value="1"/>
</dbReference>
<dbReference type="Pfam" id="PF09397">
    <property type="entry name" value="FtsK_gamma"/>
    <property type="match status" value="1"/>
</dbReference>
<dbReference type="Pfam" id="PF01580">
    <property type="entry name" value="FtsK_SpoIIIE"/>
    <property type="match status" value="1"/>
</dbReference>
<dbReference type="SMART" id="SM00382">
    <property type="entry name" value="AAA"/>
    <property type="match status" value="1"/>
</dbReference>
<dbReference type="SMART" id="SM00843">
    <property type="entry name" value="Ftsk_gamma"/>
    <property type="match status" value="1"/>
</dbReference>
<dbReference type="SUPFAM" id="SSF103473">
    <property type="entry name" value="MFS general substrate transporter"/>
    <property type="match status" value="1"/>
</dbReference>
<dbReference type="SUPFAM" id="SSF52540">
    <property type="entry name" value="P-loop containing nucleoside triphosphate hydrolases"/>
    <property type="match status" value="1"/>
</dbReference>
<dbReference type="SUPFAM" id="SSF46785">
    <property type="entry name" value="Winged helix' DNA-binding domain"/>
    <property type="match status" value="1"/>
</dbReference>
<dbReference type="PROSITE" id="PS50901">
    <property type="entry name" value="FTSK"/>
    <property type="match status" value="1"/>
</dbReference>
<organism>
    <name type="scientific">Staphylococcus epidermidis (strain ATCC 35984 / DSM 28319 / BCRC 17069 / CCUG 31568 / BM 3577 / RP62A)</name>
    <dbReference type="NCBI Taxonomy" id="176279"/>
    <lineage>
        <taxon>Bacteria</taxon>
        <taxon>Bacillati</taxon>
        <taxon>Bacillota</taxon>
        <taxon>Bacilli</taxon>
        <taxon>Bacillales</taxon>
        <taxon>Staphylococcaceae</taxon>
        <taxon>Staphylococcus</taxon>
    </lineage>
</organism>